<gene>
    <name evidence="1" type="primary">gcvH</name>
    <name type="ordered locus">Sden_0834</name>
</gene>
<keyword id="KW-0450">Lipoyl</keyword>
<keyword id="KW-1185">Reference proteome</keyword>
<proteinExistence type="inferred from homology"/>
<feature type="chain" id="PRO_0000302430" description="Glycine cleavage system H protein">
    <location>
        <begin position="1"/>
        <end position="129"/>
    </location>
</feature>
<feature type="domain" description="Lipoyl-binding" evidence="2">
    <location>
        <begin position="24"/>
        <end position="106"/>
    </location>
</feature>
<feature type="modified residue" description="N6-lipoyllysine" evidence="1">
    <location>
        <position position="65"/>
    </location>
</feature>
<reference key="1">
    <citation type="submission" date="2006-03" db="EMBL/GenBank/DDBJ databases">
        <title>Complete sequence of Shewanella denitrificans OS217.</title>
        <authorList>
            <consortium name="US DOE Joint Genome Institute"/>
            <person name="Copeland A."/>
            <person name="Lucas S."/>
            <person name="Lapidus A."/>
            <person name="Barry K."/>
            <person name="Detter J.C."/>
            <person name="Glavina del Rio T."/>
            <person name="Hammon N."/>
            <person name="Israni S."/>
            <person name="Dalin E."/>
            <person name="Tice H."/>
            <person name="Pitluck S."/>
            <person name="Brettin T."/>
            <person name="Bruce D."/>
            <person name="Han C."/>
            <person name="Tapia R."/>
            <person name="Gilna P."/>
            <person name="Kiss H."/>
            <person name="Schmutz J."/>
            <person name="Larimer F."/>
            <person name="Land M."/>
            <person name="Hauser L."/>
            <person name="Kyrpides N."/>
            <person name="Lykidis A."/>
            <person name="Richardson P."/>
        </authorList>
    </citation>
    <scope>NUCLEOTIDE SEQUENCE [LARGE SCALE GENOMIC DNA]</scope>
    <source>
        <strain>OS217 / ATCC BAA-1090 / DSM 15013</strain>
    </source>
</reference>
<organism>
    <name type="scientific">Shewanella denitrificans (strain OS217 / ATCC BAA-1090 / DSM 15013)</name>
    <dbReference type="NCBI Taxonomy" id="318161"/>
    <lineage>
        <taxon>Bacteria</taxon>
        <taxon>Pseudomonadati</taxon>
        <taxon>Pseudomonadota</taxon>
        <taxon>Gammaproteobacteria</taxon>
        <taxon>Alteromonadales</taxon>
        <taxon>Shewanellaceae</taxon>
        <taxon>Shewanella</taxon>
    </lineage>
</organism>
<protein>
    <recommendedName>
        <fullName evidence="1">Glycine cleavage system H protein</fullName>
    </recommendedName>
</protein>
<evidence type="ECO:0000255" key="1">
    <source>
        <dbReference type="HAMAP-Rule" id="MF_00272"/>
    </source>
</evidence>
<evidence type="ECO:0000255" key="2">
    <source>
        <dbReference type="PROSITE-ProRule" id="PRU01066"/>
    </source>
</evidence>
<comment type="function">
    <text evidence="1">The glycine cleavage system catalyzes the degradation of glycine. The H protein shuttles the methylamine group of glycine from the P protein to the T protein.</text>
</comment>
<comment type="cofactor">
    <cofactor evidence="1">
        <name>(R)-lipoate</name>
        <dbReference type="ChEBI" id="CHEBI:83088"/>
    </cofactor>
    <text evidence="1">Binds 1 lipoyl cofactor covalently.</text>
</comment>
<comment type="subunit">
    <text evidence="1">The glycine cleavage system is composed of four proteins: P, T, L and H.</text>
</comment>
<comment type="similarity">
    <text evidence="1">Belongs to the GcvH family.</text>
</comment>
<dbReference type="EMBL" id="CP000302">
    <property type="protein sequence ID" value="ABE54123.1"/>
    <property type="molecule type" value="Genomic_DNA"/>
</dbReference>
<dbReference type="RefSeq" id="WP_011495288.1">
    <property type="nucleotide sequence ID" value="NC_007954.1"/>
</dbReference>
<dbReference type="SMR" id="Q12R03"/>
<dbReference type="STRING" id="318161.Sden_0834"/>
<dbReference type="KEGG" id="sdn:Sden_0834"/>
<dbReference type="eggNOG" id="COG0509">
    <property type="taxonomic scope" value="Bacteria"/>
</dbReference>
<dbReference type="HOGENOM" id="CLU_097408_2_1_6"/>
<dbReference type="OrthoDB" id="9796712at2"/>
<dbReference type="Proteomes" id="UP000001982">
    <property type="component" value="Chromosome"/>
</dbReference>
<dbReference type="GO" id="GO:0005829">
    <property type="term" value="C:cytosol"/>
    <property type="evidence" value="ECO:0007669"/>
    <property type="project" value="TreeGrafter"/>
</dbReference>
<dbReference type="GO" id="GO:0005960">
    <property type="term" value="C:glycine cleavage complex"/>
    <property type="evidence" value="ECO:0007669"/>
    <property type="project" value="InterPro"/>
</dbReference>
<dbReference type="GO" id="GO:0019464">
    <property type="term" value="P:glycine decarboxylation via glycine cleavage system"/>
    <property type="evidence" value="ECO:0007669"/>
    <property type="project" value="UniProtKB-UniRule"/>
</dbReference>
<dbReference type="CDD" id="cd06848">
    <property type="entry name" value="GCS_H"/>
    <property type="match status" value="1"/>
</dbReference>
<dbReference type="FunFam" id="2.40.50.100:FF:000011">
    <property type="entry name" value="Glycine cleavage system H protein"/>
    <property type="match status" value="1"/>
</dbReference>
<dbReference type="Gene3D" id="2.40.50.100">
    <property type="match status" value="1"/>
</dbReference>
<dbReference type="HAMAP" id="MF_00272">
    <property type="entry name" value="GcvH"/>
    <property type="match status" value="1"/>
</dbReference>
<dbReference type="InterPro" id="IPR003016">
    <property type="entry name" value="2-oxoA_DH_lipoyl-BS"/>
</dbReference>
<dbReference type="InterPro" id="IPR000089">
    <property type="entry name" value="Biotin_lipoyl"/>
</dbReference>
<dbReference type="InterPro" id="IPR002930">
    <property type="entry name" value="GCV_H"/>
</dbReference>
<dbReference type="InterPro" id="IPR033753">
    <property type="entry name" value="GCV_H/Fam206"/>
</dbReference>
<dbReference type="InterPro" id="IPR017453">
    <property type="entry name" value="GCV_H_sub"/>
</dbReference>
<dbReference type="InterPro" id="IPR011053">
    <property type="entry name" value="Single_hybrid_motif"/>
</dbReference>
<dbReference type="NCBIfam" id="TIGR00527">
    <property type="entry name" value="gcvH"/>
    <property type="match status" value="1"/>
</dbReference>
<dbReference type="NCBIfam" id="NF002270">
    <property type="entry name" value="PRK01202.1"/>
    <property type="match status" value="1"/>
</dbReference>
<dbReference type="PANTHER" id="PTHR11715">
    <property type="entry name" value="GLYCINE CLEAVAGE SYSTEM H PROTEIN"/>
    <property type="match status" value="1"/>
</dbReference>
<dbReference type="PANTHER" id="PTHR11715:SF3">
    <property type="entry name" value="GLYCINE CLEAVAGE SYSTEM H PROTEIN-RELATED"/>
    <property type="match status" value="1"/>
</dbReference>
<dbReference type="Pfam" id="PF01597">
    <property type="entry name" value="GCV_H"/>
    <property type="match status" value="1"/>
</dbReference>
<dbReference type="SUPFAM" id="SSF51230">
    <property type="entry name" value="Single hybrid motif"/>
    <property type="match status" value="1"/>
</dbReference>
<dbReference type="PROSITE" id="PS50968">
    <property type="entry name" value="BIOTINYL_LIPOYL"/>
    <property type="match status" value="1"/>
</dbReference>
<dbReference type="PROSITE" id="PS00189">
    <property type="entry name" value="LIPOYL"/>
    <property type="match status" value="1"/>
</dbReference>
<accession>Q12R03</accession>
<sequence length="129" mass="13809">MSTIPTDLKFASSHEWVRKEDDGSYTVGITEHAQELLGDMVFVELPEVGDSVSAGAECAVAESVKAASDIYAPISGEVVAVNSSLEDSPELVNSDAYGDGWFFRIMPSDESEVDALLDAEGYQDVIDEA</sequence>
<name>GCSH_SHEDO</name>